<evidence type="ECO:0000250" key="1"/>
<evidence type="ECO:0000255" key="2"/>
<evidence type="ECO:0000305" key="3"/>
<sequence>MSQSRWSIVLIFALFIFGSTGVNAFFNFGHHQQQQQQQQQSYEDQVLNNPCDGYLCPDTLTCVAQQKDCPCPFPKSQLKCVLPDNKFVCISKPATHNEKFRAIYDDPVKGPKAKNKGFRDCGWVSDAYKNH</sequence>
<keyword id="KW-0732">Signal</keyword>
<accession>A7A108</accession>
<protein>
    <recommendedName>
        <fullName>Long chronological lifespan protein 2</fullName>
    </recommendedName>
</protein>
<reference key="1">
    <citation type="journal article" date="2007" name="Proc. Natl. Acad. Sci. U.S.A.">
        <title>Genome sequencing and comparative analysis of Saccharomyces cerevisiae strain YJM789.</title>
        <authorList>
            <person name="Wei W."/>
            <person name="McCusker J.H."/>
            <person name="Hyman R.W."/>
            <person name="Jones T."/>
            <person name="Ning Y."/>
            <person name="Cao Z."/>
            <person name="Gu Z."/>
            <person name="Bruno D."/>
            <person name="Miranda M."/>
            <person name="Nguyen M."/>
            <person name="Wilhelmy J."/>
            <person name="Komp C."/>
            <person name="Tamse R."/>
            <person name="Wang X."/>
            <person name="Jia P."/>
            <person name="Luedi P."/>
            <person name="Oefner P.J."/>
            <person name="David L."/>
            <person name="Dietrich F.S."/>
            <person name="Li Y."/>
            <person name="Davis R.W."/>
            <person name="Steinmetz L.M."/>
        </authorList>
    </citation>
    <scope>NUCLEOTIDE SEQUENCE [LARGE SCALE GENOMIC DNA]</scope>
    <source>
        <strain>YJM789</strain>
    </source>
</reference>
<comment type="function">
    <text evidence="1">Probable component of the endoplasmic reticulum-associated degradation (ERAD) pathway.</text>
</comment>
<comment type="similarity">
    <text evidence="3">Belongs to the LCL2 family.</text>
</comment>
<feature type="signal peptide" evidence="2">
    <location>
        <begin position="1"/>
        <end position="24"/>
    </location>
</feature>
<feature type="chain" id="PRO_0000408635" description="Long chronological lifespan protein 2">
    <location>
        <begin position="25"/>
        <end position="131"/>
    </location>
</feature>
<proteinExistence type="inferred from homology"/>
<dbReference type="EMBL" id="AAFW02000167">
    <property type="protein sequence ID" value="EDN59649.1"/>
    <property type="molecule type" value="Genomic_DNA"/>
</dbReference>
<dbReference type="SMR" id="A7A108"/>
<dbReference type="HOGENOM" id="CLU_142363_1_0_1"/>
<dbReference type="Proteomes" id="UP000007060">
    <property type="component" value="Unassembled WGS sequence"/>
</dbReference>
<dbReference type="GO" id="GO:0036503">
    <property type="term" value="P:ERAD pathway"/>
    <property type="evidence" value="ECO:0007669"/>
    <property type="project" value="TreeGrafter"/>
</dbReference>
<dbReference type="CDD" id="cd23996">
    <property type="entry name" value="LCL2-like"/>
    <property type="match status" value="1"/>
</dbReference>
<dbReference type="InterPro" id="IPR034543">
    <property type="entry name" value="LCL2"/>
</dbReference>
<dbReference type="PANTHER" id="PTHR38425">
    <property type="entry name" value="LONG CHRONOLOGICAL LIFESPAN PROTEIN 2"/>
    <property type="match status" value="1"/>
</dbReference>
<dbReference type="PANTHER" id="PTHR38425:SF1">
    <property type="entry name" value="LONG CHRONOLOGICAL LIFESPAN PROTEIN 2"/>
    <property type="match status" value="1"/>
</dbReference>
<name>LCL2_YEAS7</name>
<gene>
    <name type="primary">LCL2</name>
    <name type="ORF">SCY_3682</name>
</gene>
<organism>
    <name type="scientific">Saccharomyces cerevisiae (strain YJM789)</name>
    <name type="common">Baker's yeast</name>
    <dbReference type="NCBI Taxonomy" id="307796"/>
    <lineage>
        <taxon>Eukaryota</taxon>
        <taxon>Fungi</taxon>
        <taxon>Dikarya</taxon>
        <taxon>Ascomycota</taxon>
        <taxon>Saccharomycotina</taxon>
        <taxon>Saccharomycetes</taxon>
        <taxon>Saccharomycetales</taxon>
        <taxon>Saccharomycetaceae</taxon>
        <taxon>Saccharomyces</taxon>
    </lineage>
</organism>